<organism>
    <name type="scientific">Homo sapiens</name>
    <name type="common">Human</name>
    <dbReference type="NCBI Taxonomy" id="9606"/>
    <lineage>
        <taxon>Eukaryota</taxon>
        <taxon>Metazoa</taxon>
        <taxon>Chordata</taxon>
        <taxon>Craniata</taxon>
        <taxon>Vertebrata</taxon>
        <taxon>Euteleostomi</taxon>
        <taxon>Mammalia</taxon>
        <taxon>Eutheria</taxon>
        <taxon>Euarchontoglires</taxon>
        <taxon>Primates</taxon>
        <taxon>Haplorrhini</taxon>
        <taxon>Catarrhini</taxon>
        <taxon>Hominidae</taxon>
        <taxon>Homo</taxon>
    </lineage>
</organism>
<dbReference type="EC" id="3.1.3.36"/>
<dbReference type="EMBL" id="M74161">
    <property type="protein sequence ID" value="AAA79207.1"/>
    <property type="status" value="ALT_INIT"/>
    <property type="molecule type" value="mRNA"/>
</dbReference>
<dbReference type="EMBL" id="AL603790">
    <property type="status" value="NOT_ANNOTATED_CDS"/>
    <property type="molecule type" value="Genomic_DNA"/>
</dbReference>
<dbReference type="EMBL" id="AL929472">
    <property type="status" value="NOT_ANNOTATED_CDS"/>
    <property type="molecule type" value="Genomic_DNA"/>
</dbReference>
<dbReference type="EMBL" id="BX296560">
    <property type="status" value="NOT_ANNOTATED_CDS"/>
    <property type="molecule type" value="Genomic_DNA"/>
</dbReference>
<dbReference type="EMBL" id="BC042529">
    <property type="protein sequence ID" value="AAH42529.2"/>
    <property type="molecule type" value="mRNA"/>
</dbReference>
<dbReference type="EMBL" id="BC058932">
    <property type="protein sequence ID" value="AAH58932.1"/>
    <property type="molecule type" value="mRNA"/>
</dbReference>
<dbReference type="EMBL" id="AL833055">
    <property type="protein sequence ID" value="CAH56301.1"/>
    <property type="molecule type" value="mRNA"/>
</dbReference>
<dbReference type="CCDS" id="CCDS41306.1">
    <molecule id="P32019-2"/>
</dbReference>
<dbReference type="CCDS" id="CCDS72760.1">
    <molecule id="P32019-3"/>
</dbReference>
<dbReference type="RefSeq" id="NP_001284363.1">
    <molecule id="P32019-3"/>
    <property type="nucleotide sequence ID" value="NM_001297434.2"/>
</dbReference>
<dbReference type="RefSeq" id="NP_001352749.1">
    <molecule id="P32019-2"/>
    <property type="nucleotide sequence ID" value="NM_001365820.1"/>
</dbReference>
<dbReference type="RefSeq" id="NP_005531.2">
    <molecule id="P32019-2"/>
    <property type="nucleotide sequence ID" value="NM_005540.3"/>
</dbReference>
<dbReference type="PDB" id="3MTC">
    <property type="method" value="X-ray"/>
    <property type="resolution" value="2.40 A"/>
    <property type="chains" value="A=339-643"/>
</dbReference>
<dbReference type="PDB" id="3N9V">
    <property type="method" value="X-ray"/>
    <property type="resolution" value="2.65 A"/>
    <property type="chains" value="A/B=342-646"/>
</dbReference>
<dbReference type="PDB" id="4CML">
    <property type="method" value="X-ray"/>
    <property type="resolution" value="2.30 A"/>
    <property type="chains" value="A=339-643"/>
</dbReference>
<dbReference type="PDB" id="5A7I">
    <property type="method" value="X-ray"/>
    <property type="resolution" value="2.89 A"/>
    <property type="chains" value="A=339-643"/>
</dbReference>
<dbReference type="PDB" id="5A7J">
    <property type="method" value="X-ray"/>
    <property type="resolution" value="2.90 A"/>
    <property type="chains" value="A/B=339-643"/>
</dbReference>
<dbReference type="PDBsum" id="3MTC"/>
<dbReference type="PDBsum" id="3N9V"/>
<dbReference type="PDBsum" id="4CML"/>
<dbReference type="PDBsum" id="5A7I"/>
<dbReference type="PDBsum" id="5A7J"/>
<dbReference type="SMR" id="P32019"/>
<dbReference type="BioGRID" id="109845">
    <property type="interactions" value="37"/>
</dbReference>
<dbReference type="FunCoup" id="P32019">
    <property type="interactions" value="2408"/>
</dbReference>
<dbReference type="IntAct" id="P32019">
    <property type="interactions" value="21"/>
</dbReference>
<dbReference type="MINT" id="P32019"/>
<dbReference type="STRING" id="9606.ENSP00000362115"/>
<dbReference type="BindingDB" id="P32019"/>
<dbReference type="ChEMBL" id="CHEMBL2636"/>
<dbReference type="DrugBank" id="DB03158">
    <property type="generic name" value="D-Myo-Inositol-1,4-Bisphosphate"/>
</dbReference>
<dbReference type="DEPOD" id="INPP5B"/>
<dbReference type="GlyGen" id="P32019">
    <property type="glycosylation" value="1 site, 1 O-linked glycan (1 site)"/>
</dbReference>
<dbReference type="iPTMnet" id="P32019"/>
<dbReference type="PhosphoSitePlus" id="P32019"/>
<dbReference type="BioMuta" id="INPP5B"/>
<dbReference type="DMDM" id="281185510"/>
<dbReference type="jPOST" id="P32019"/>
<dbReference type="MassIVE" id="P32019"/>
<dbReference type="PaxDb" id="9606-ENSP00000362115"/>
<dbReference type="PeptideAtlas" id="P32019"/>
<dbReference type="ProteomicsDB" id="54832">
    <molecule id="P32019-1"/>
</dbReference>
<dbReference type="ProteomicsDB" id="54833">
    <molecule id="P32019-2"/>
</dbReference>
<dbReference type="ProteomicsDB" id="54834">
    <molecule id="P32019-3"/>
</dbReference>
<dbReference type="ProteomicsDB" id="54835">
    <molecule id="P32019-4"/>
</dbReference>
<dbReference type="Pumba" id="P32019"/>
<dbReference type="ABCD" id="P32019">
    <property type="antibodies" value="1 sequenced antibody"/>
</dbReference>
<dbReference type="Antibodypedia" id="31808">
    <property type="antibodies" value="167 antibodies from 24 providers"/>
</dbReference>
<dbReference type="DNASU" id="3633"/>
<dbReference type="Ensembl" id="ENST00000373024.8">
    <molecule id="P32019-2"/>
    <property type="protein sequence ID" value="ENSP00000362115.3"/>
    <property type="gene ID" value="ENSG00000204084.14"/>
</dbReference>
<dbReference type="Ensembl" id="ENST00000373026.5">
    <molecule id="P32019-1"/>
    <property type="protein sequence ID" value="ENSP00000362117.1"/>
    <property type="gene ID" value="ENSG00000204084.14"/>
</dbReference>
<dbReference type="Ensembl" id="ENST00000373027.5">
    <molecule id="P32019-3"/>
    <property type="protein sequence ID" value="ENSP00000362118.1"/>
    <property type="gene ID" value="ENSG00000204084.14"/>
</dbReference>
<dbReference type="GeneID" id="3633"/>
<dbReference type="KEGG" id="hsa:3633"/>
<dbReference type="MANE-Select" id="ENST00000373024.8">
    <molecule id="P32019-2"/>
    <property type="protein sequence ID" value="ENSP00000362115.3"/>
    <property type="RefSeq nucleotide sequence ID" value="NM_005540.3"/>
    <property type="RefSeq protein sequence ID" value="NP_005531.2"/>
</dbReference>
<dbReference type="UCSC" id="uc001ccf.1">
    <molecule id="P32019-1"/>
    <property type="organism name" value="human"/>
</dbReference>
<dbReference type="AGR" id="HGNC:6077"/>
<dbReference type="CTD" id="3633"/>
<dbReference type="DisGeNET" id="3633"/>
<dbReference type="GeneCards" id="INPP5B"/>
<dbReference type="HGNC" id="HGNC:6077">
    <property type="gene designation" value="INPP5B"/>
</dbReference>
<dbReference type="HPA" id="ENSG00000204084">
    <property type="expression patterns" value="Low tissue specificity"/>
</dbReference>
<dbReference type="MIM" id="147264">
    <property type="type" value="gene"/>
</dbReference>
<dbReference type="neXtProt" id="NX_P32019"/>
<dbReference type="OpenTargets" id="ENSG00000204084"/>
<dbReference type="PharmGKB" id="PA29885"/>
<dbReference type="VEuPathDB" id="HostDB:ENSG00000204084"/>
<dbReference type="eggNOG" id="KOG0565">
    <property type="taxonomic scope" value="Eukaryota"/>
</dbReference>
<dbReference type="eggNOG" id="KOG4270">
    <property type="taxonomic scope" value="Eukaryota"/>
</dbReference>
<dbReference type="GeneTree" id="ENSGT00940000156762"/>
<dbReference type="HOGENOM" id="CLU_006779_2_0_1"/>
<dbReference type="InParanoid" id="P32019"/>
<dbReference type="OMA" id="VREDAWC"/>
<dbReference type="OrthoDB" id="7862313at2759"/>
<dbReference type="PAN-GO" id="P32019">
    <property type="GO annotations" value="6 GO annotations based on evolutionary models"/>
</dbReference>
<dbReference type="PhylomeDB" id="P32019"/>
<dbReference type="TreeFam" id="TF317034"/>
<dbReference type="BioCyc" id="MetaCyc:HS05898-MONOMER"/>
<dbReference type="BRENDA" id="3.1.3.36">
    <property type="organism ID" value="2681"/>
</dbReference>
<dbReference type="PathwayCommons" id="P32019"/>
<dbReference type="Reactome" id="R-HSA-1855183">
    <property type="pathway name" value="Synthesis of IP2, IP, and Ins in the cytosol"/>
</dbReference>
<dbReference type="Reactome" id="R-HSA-1855204">
    <property type="pathway name" value="Synthesis of IP3 and IP4 in the cytosol"/>
</dbReference>
<dbReference type="SABIO-RK" id="P32019"/>
<dbReference type="SignaLink" id="P32019"/>
<dbReference type="SIGNOR" id="P32019"/>
<dbReference type="BioGRID-ORCS" id="3633">
    <property type="hits" value="15 hits in 1169 CRISPR screens"/>
</dbReference>
<dbReference type="ChiTaRS" id="INPP5B">
    <property type="organism name" value="human"/>
</dbReference>
<dbReference type="EvolutionaryTrace" id="P32019"/>
<dbReference type="GeneWiki" id="INPP5B"/>
<dbReference type="GenomeRNAi" id="3633"/>
<dbReference type="Pharos" id="P32019">
    <property type="development level" value="Tbio"/>
</dbReference>
<dbReference type="PRO" id="PR:P32019"/>
<dbReference type="Proteomes" id="UP000005640">
    <property type="component" value="Chromosome 1"/>
</dbReference>
<dbReference type="RNAct" id="P32019">
    <property type="molecule type" value="protein"/>
</dbReference>
<dbReference type="Bgee" id="ENSG00000204084">
    <property type="expression patterns" value="Expressed in left ovary and 150 other cell types or tissues"/>
</dbReference>
<dbReference type="ExpressionAtlas" id="P32019">
    <property type="expression patterns" value="baseline and differential"/>
</dbReference>
<dbReference type="GO" id="GO:0005737">
    <property type="term" value="C:cytoplasm"/>
    <property type="evidence" value="ECO:0000318"/>
    <property type="project" value="GO_Central"/>
</dbReference>
<dbReference type="GO" id="GO:0005829">
    <property type="term" value="C:cytosol"/>
    <property type="evidence" value="ECO:0000314"/>
    <property type="project" value="HPA"/>
</dbReference>
<dbReference type="GO" id="GO:0031901">
    <property type="term" value="C:early endosome membrane"/>
    <property type="evidence" value="ECO:0007669"/>
    <property type="project" value="UniProtKB-SubCell"/>
</dbReference>
<dbReference type="GO" id="GO:0005793">
    <property type="term" value="C:endoplasmic reticulum-Golgi intermediate compartment"/>
    <property type="evidence" value="ECO:0007669"/>
    <property type="project" value="UniProtKB-SubCell"/>
</dbReference>
<dbReference type="GO" id="GO:0005794">
    <property type="term" value="C:Golgi apparatus"/>
    <property type="evidence" value="ECO:0007669"/>
    <property type="project" value="UniProtKB-SubCell"/>
</dbReference>
<dbReference type="GO" id="GO:0016020">
    <property type="term" value="C:membrane"/>
    <property type="evidence" value="ECO:0000314"/>
    <property type="project" value="UniProtKB"/>
</dbReference>
<dbReference type="GO" id="GO:0043005">
    <property type="term" value="C:neuron projection"/>
    <property type="evidence" value="ECO:0000318"/>
    <property type="project" value="GO_Central"/>
</dbReference>
<dbReference type="GO" id="GO:0030670">
    <property type="term" value="C:phagocytic vesicle membrane"/>
    <property type="evidence" value="ECO:0007669"/>
    <property type="project" value="UniProtKB-SubCell"/>
</dbReference>
<dbReference type="GO" id="GO:0005886">
    <property type="term" value="C:plasma membrane"/>
    <property type="evidence" value="ECO:0000304"/>
    <property type="project" value="Reactome"/>
</dbReference>
<dbReference type="GO" id="GO:0052659">
    <property type="term" value="F:inositol-1,3,4,5-tetrakisphosphate 5-phosphatase activity"/>
    <property type="evidence" value="ECO:0000304"/>
    <property type="project" value="Reactome"/>
</dbReference>
<dbReference type="GO" id="GO:0052658">
    <property type="term" value="F:inositol-1,4,5-trisphosphate 5-phosphatase activity"/>
    <property type="evidence" value="ECO:0000314"/>
    <property type="project" value="UniProtKB"/>
</dbReference>
<dbReference type="GO" id="GO:0046872">
    <property type="term" value="F:metal ion binding"/>
    <property type="evidence" value="ECO:0007669"/>
    <property type="project" value="UniProtKB-KW"/>
</dbReference>
<dbReference type="GO" id="GO:0004439">
    <property type="term" value="F:phosphatidylinositol-4,5-bisphosphate 5-phosphatase activity"/>
    <property type="evidence" value="ECO:0000314"/>
    <property type="project" value="UniProtKB"/>
</dbReference>
<dbReference type="GO" id="GO:0030317">
    <property type="term" value="P:flagellated sperm motility"/>
    <property type="evidence" value="ECO:0007669"/>
    <property type="project" value="Ensembl"/>
</dbReference>
<dbReference type="GO" id="GO:0001701">
    <property type="term" value="P:in utero embryonic development"/>
    <property type="evidence" value="ECO:0007669"/>
    <property type="project" value="Ensembl"/>
</dbReference>
<dbReference type="GO" id="GO:0043647">
    <property type="term" value="P:inositol phosphate metabolic process"/>
    <property type="evidence" value="ECO:0000304"/>
    <property type="project" value="Reactome"/>
</dbReference>
<dbReference type="GO" id="GO:0046856">
    <property type="term" value="P:phosphatidylinositol dephosphorylation"/>
    <property type="evidence" value="ECO:0000314"/>
    <property type="project" value="UniProtKB"/>
</dbReference>
<dbReference type="GO" id="GO:0070613">
    <property type="term" value="P:regulation of protein processing"/>
    <property type="evidence" value="ECO:0007669"/>
    <property type="project" value="Ensembl"/>
</dbReference>
<dbReference type="GO" id="GO:0007165">
    <property type="term" value="P:signal transduction"/>
    <property type="evidence" value="ECO:0007669"/>
    <property type="project" value="InterPro"/>
</dbReference>
<dbReference type="GO" id="GO:0007283">
    <property type="term" value="P:spermatogenesis"/>
    <property type="evidence" value="ECO:0007669"/>
    <property type="project" value="Ensembl"/>
</dbReference>
<dbReference type="CDD" id="cd09093">
    <property type="entry name" value="INPP5c_INPP5B"/>
    <property type="match status" value="1"/>
</dbReference>
<dbReference type="CDD" id="cd13383">
    <property type="entry name" value="PH_OCRL2"/>
    <property type="match status" value="1"/>
</dbReference>
<dbReference type="CDD" id="cd04380">
    <property type="entry name" value="RhoGAP_OCRL1"/>
    <property type="match status" value="1"/>
</dbReference>
<dbReference type="FunFam" id="2.60.40.10:FF:000132">
    <property type="entry name" value="Inositol polyphosphate 5-phosphatase OCRL-1 isoform b"/>
    <property type="match status" value="1"/>
</dbReference>
<dbReference type="FunFam" id="1.10.555.10:FF:000012">
    <property type="entry name" value="Putative inositol polyphosphate 5-phosphatase OCRL-1"/>
    <property type="match status" value="1"/>
</dbReference>
<dbReference type="FunFam" id="2.30.29.110:FF:000002">
    <property type="entry name" value="Type II inositol 1,4,5-trisphosphate 5-phosphatase"/>
    <property type="match status" value="1"/>
</dbReference>
<dbReference type="FunFam" id="3.60.10.10:FF:000004">
    <property type="entry name" value="Type II inositol 1,4,5-trisphosphate 5-phosphatase"/>
    <property type="match status" value="1"/>
</dbReference>
<dbReference type="Gene3D" id="2.30.29.110">
    <property type="match status" value="1"/>
</dbReference>
<dbReference type="Gene3D" id="3.60.10.10">
    <property type="entry name" value="Endonuclease/exonuclease/phosphatase"/>
    <property type="match status" value="1"/>
</dbReference>
<dbReference type="Gene3D" id="2.60.40.10">
    <property type="entry name" value="Immunoglobulins"/>
    <property type="match status" value="1"/>
</dbReference>
<dbReference type="Gene3D" id="1.10.555.10">
    <property type="entry name" value="Rho GTPase activation protein"/>
    <property type="match status" value="1"/>
</dbReference>
<dbReference type="InterPro" id="IPR036691">
    <property type="entry name" value="Endo/exonu/phosph_ase_sf"/>
</dbReference>
<dbReference type="InterPro" id="IPR013783">
    <property type="entry name" value="Ig-like_fold"/>
</dbReference>
<dbReference type="InterPro" id="IPR031896">
    <property type="entry name" value="INPP5B_PH_dom"/>
</dbReference>
<dbReference type="InterPro" id="IPR046985">
    <property type="entry name" value="IP5"/>
</dbReference>
<dbReference type="InterPro" id="IPR000300">
    <property type="entry name" value="IPPc"/>
</dbReference>
<dbReference type="InterPro" id="IPR048869">
    <property type="entry name" value="OCRL-1_2_ASH"/>
</dbReference>
<dbReference type="InterPro" id="IPR037793">
    <property type="entry name" value="OCRL1/INPP5B_INPP5c"/>
</dbReference>
<dbReference type="InterPro" id="IPR008936">
    <property type="entry name" value="Rho_GTPase_activation_prot"/>
</dbReference>
<dbReference type="InterPro" id="IPR000198">
    <property type="entry name" value="RhoGAP_dom"/>
</dbReference>
<dbReference type="InterPro" id="IPR047078">
    <property type="entry name" value="RhoGAP_OCRL1"/>
</dbReference>
<dbReference type="PANTHER" id="PTHR11200">
    <property type="entry name" value="INOSITOL 5-PHOSPHATASE"/>
    <property type="match status" value="1"/>
</dbReference>
<dbReference type="PANTHER" id="PTHR11200:SF300">
    <property type="entry name" value="TYPE II INOSITOL 1,4,5-TRISPHOSPHATE 5-PHOSPHATASE"/>
    <property type="match status" value="1"/>
</dbReference>
<dbReference type="Pfam" id="PF22669">
    <property type="entry name" value="Exo_endo_phos2"/>
    <property type="match status" value="1"/>
</dbReference>
<dbReference type="Pfam" id="PF16776">
    <property type="entry name" value="INPP5B_PH"/>
    <property type="match status" value="1"/>
</dbReference>
<dbReference type="Pfam" id="PF21310">
    <property type="entry name" value="OCRL-like_ASH"/>
    <property type="match status" value="1"/>
</dbReference>
<dbReference type="Pfam" id="PF00620">
    <property type="entry name" value="RhoGAP"/>
    <property type="match status" value="1"/>
</dbReference>
<dbReference type="SMART" id="SM00128">
    <property type="entry name" value="IPPc"/>
    <property type="match status" value="1"/>
</dbReference>
<dbReference type="SMART" id="SM00324">
    <property type="entry name" value="RhoGAP"/>
    <property type="match status" value="1"/>
</dbReference>
<dbReference type="SUPFAM" id="SSF56219">
    <property type="entry name" value="DNase I-like"/>
    <property type="match status" value="1"/>
</dbReference>
<dbReference type="SUPFAM" id="SSF48350">
    <property type="entry name" value="GTPase activation domain, GAP"/>
    <property type="match status" value="1"/>
</dbReference>
<dbReference type="PROSITE" id="PS50238">
    <property type="entry name" value="RHOGAP"/>
    <property type="match status" value="1"/>
</dbReference>
<accession>P32019</accession>
<accession>C9J6U5</accession>
<accession>Q5VSG9</accession>
<accession>Q5VSH0</accession>
<accession>Q5VSH1</accession>
<accession>Q658Q5</accession>
<accession>Q6P6D4</accession>
<accession>Q6PD53</accession>
<accession>Q86YE1</accession>
<protein>
    <recommendedName>
        <fullName>Type II inositol 1,4,5-trisphosphate 5-phosphatase</fullName>
        <ecNumber>3.1.3.36</ecNumber>
    </recommendedName>
    <alternativeName>
        <fullName>75 kDa inositol polyphosphate-5-phosphatase</fullName>
    </alternativeName>
    <alternativeName>
        <fullName>Phosphoinositide 5-phosphatase</fullName>
        <shortName>5PTase</shortName>
    </alternativeName>
</protein>
<proteinExistence type="evidence at protein level"/>
<keyword id="KW-0002">3D-structure</keyword>
<keyword id="KW-0025">Alternative splicing</keyword>
<keyword id="KW-0963">Cytoplasm</keyword>
<keyword id="KW-0968">Cytoplasmic vesicle</keyword>
<keyword id="KW-0903">Direct protein sequencing</keyword>
<keyword id="KW-0967">Endosome</keyword>
<keyword id="KW-0333">Golgi apparatus</keyword>
<keyword id="KW-0378">Hydrolase</keyword>
<keyword id="KW-0443">Lipid metabolism</keyword>
<keyword id="KW-0449">Lipoprotein</keyword>
<keyword id="KW-0460">Magnesium</keyword>
<keyword id="KW-0472">Membrane</keyword>
<keyword id="KW-0479">Metal-binding</keyword>
<keyword id="KW-0488">Methylation</keyword>
<keyword id="KW-0636">Prenylation</keyword>
<keyword id="KW-1267">Proteomics identification</keyword>
<keyword id="KW-1185">Reference proteome</keyword>
<evidence type="ECO:0000250" key="1"/>
<evidence type="ECO:0000250" key="2">
    <source>
        <dbReference type="UniProtKB" id="Q8K337"/>
    </source>
</evidence>
<evidence type="ECO:0000255" key="3"/>
<evidence type="ECO:0000255" key="4">
    <source>
        <dbReference type="PROSITE-ProRule" id="PRU00172"/>
    </source>
</evidence>
<evidence type="ECO:0000256" key="5">
    <source>
        <dbReference type="SAM" id="MobiDB-lite"/>
    </source>
</evidence>
<evidence type="ECO:0000269" key="6">
    <source>
    </source>
</evidence>
<evidence type="ECO:0000269" key="7">
    <source>
    </source>
</evidence>
<evidence type="ECO:0000269" key="8">
    <source>
    </source>
</evidence>
<evidence type="ECO:0000269" key="9">
    <source>
    </source>
</evidence>
<evidence type="ECO:0000269" key="10">
    <source>
    </source>
</evidence>
<evidence type="ECO:0000269" key="11">
    <source>
    </source>
</evidence>
<evidence type="ECO:0000269" key="12">
    <source>
    </source>
</evidence>
<evidence type="ECO:0000269" key="13">
    <source>
    </source>
</evidence>
<evidence type="ECO:0000269" key="14">
    <source ref="12"/>
</evidence>
<evidence type="ECO:0000303" key="15">
    <source>
    </source>
</evidence>
<evidence type="ECO:0000303" key="16">
    <source>
    </source>
</evidence>
<evidence type="ECO:0000305" key="17"/>
<evidence type="ECO:0000305" key="18">
    <source>
    </source>
</evidence>
<evidence type="ECO:0007829" key="19">
    <source>
        <dbReference type="PDB" id="3MTC"/>
    </source>
</evidence>
<evidence type="ECO:0007829" key="20">
    <source>
        <dbReference type="PDB" id="4CML"/>
    </source>
</evidence>
<evidence type="ECO:0007829" key="21">
    <source>
        <dbReference type="PDB" id="5A7J"/>
    </source>
</evidence>
<feature type="chain" id="PRO_0000015640" description="Type II inositol 1,4,5-trisphosphate 5-phosphatase">
    <location>
        <begin position="1"/>
        <end position="990"/>
    </location>
</feature>
<feature type="propeptide" id="PRO_0000422293" description="Removed in mature form" evidence="3">
    <location>
        <begin position="991"/>
        <end position="993"/>
    </location>
</feature>
<feature type="domain" description="PH">
    <location>
        <begin position="22"/>
        <end position="148"/>
    </location>
</feature>
<feature type="domain" description="Rho-GAP" evidence="4">
    <location>
        <begin position="821"/>
        <end position="993"/>
    </location>
</feature>
<feature type="region of interest" description="Disordered" evidence="5">
    <location>
        <begin position="224"/>
        <end position="302"/>
    </location>
</feature>
<feature type="region of interest" description="5-phosphatase" evidence="1">
    <location>
        <begin position="342"/>
        <end position="668"/>
    </location>
</feature>
<feature type="region of interest" description="ASH" evidence="1">
    <location>
        <begin position="669"/>
        <end position="782"/>
    </location>
</feature>
<feature type="compositionally biased region" description="Basic and acidic residues" evidence="5">
    <location>
        <begin position="228"/>
        <end position="243"/>
    </location>
</feature>
<feature type="binding site" evidence="14">
    <location>
        <position position="355"/>
    </location>
    <ligand>
        <name>Mg(2+)</name>
        <dbReference type="ChEBI" id="CHEBI:18420"/>
    </ligand>
</feature>
<feature type="binding site" evidence="14">
    <location>
        <position position="383"/>
    </location>
    <ligand>
        <name>Mg(2+)</name>
        <dbReference type="ChEBI" id="CHEBI:18420"/>
    </ligand>
</feature>
<feature type="binding site">
    <location>
        <position position="383"/>
    </location>
    <ligand>
        <name>substrate</name>
    </ligand>
</feature>
<feature type="binding site">
    <location>
        <begin position="459"/>
        <end position="460"/>
    </location>
    <ligand>
        <name>substrate</name>
    </ligand>
</feature>
<feature type="binding site">
    <location>
        <begin position="582"/>
        <end position="583"/>
    </location>
    <ligand>
        <name>substrate</name>
    </ligand>
</feature>
<feature type="binding site">
    <location>
        <begin position="596"/>
        <end position="598"/>
    </location>
    <ligand>
        <name>substrate</name>
    </ligand>
</feature>
<feature type="site" description="Arginine finger; crucial for GTP hydrolysis by stabilizing the transition state" evidence="4">
    <location>
        <position position="852"/>
    </location>
</feature>
<feature type="modified residue" description="Cysteine methyl ester" evidence="3">
    <location>
        <position position="990"/>
    </location>
</feature>
<feature type="lipid moiety-binding region" description="S-farnesyl cysteine" evidence="3">
    <location>
        <position position="990"/>
    </location>
</feature>
<feature type="splice variant" id="VSP_012821" description="In isoform 3." evidence="17">
    <location>
        <begin position="1"/>
        <end position="244"/>
    </location>
</feature>
<feature type="splice variant" id="VSP_012820" description="In isoform 2." evidence="16">
    <location>
        <begin position="178"/>
        <end position="257"/>
    </location>
</feature>
<feature type="splice variant" id="VSP_013902" description="In isoform 4." evidence="15">
    <original>TLMPVWTGDDGSQLDSPME</original>
    <variation>LAYLAAYCFETQLVTKSLI</variation>
    <location>
        <begin position="810"/>
        <end position="828"/>
    </location>
</feature>
<feature type="splice variant" id="VSP_013903" description="In isoform 4." evidence="15">
    <location>
        <begin position="829"/>
        <end position="993"/>
    </location>
</feature>
<feature type="sequence variant" id="VAR_061270" description="In dbSNP:rs56993041.">
    <original>G</original>
    <variation>S</variation>
    <location>
        <position position="46"/>
    </location>
</feature>
<feature type="sequence variant" id="VAR_028002" description="In dbSNP:rs11488569." evidence="6 7 13">
    <original>M</original>
    <variation>T</variation>
    <location>
        <position position="745"/>
    </location>
</feature>
<feature type="mutagenesis site" description="Loss of prenylation and membrane localization." evidence="13">
    <original>C</original>
    <variation>S</variation>
    <location>
        <position position="990"/>
    </location>
</feature>
<feature type="sequence conflict" description="In Ref. 5; AA sequence." evidence="17" ref="5">
    <original>GSDDWDTSEKCRAPAWCDRI</original>
    <variation>RALTTGIPVRSAVLLPGVIGF</variation>
    <location>
        <begin position="587"/>
        <end position="606"/>
    </location>
</feature>
<feature type="sequence conflict" description="In Ref. 5; AA sequence." evidence="17" ref="5">
    <original>G</original>
    <variation>P</variation>
    <location>
        <position position="911"/>
    </location>
</feature>
<feature type="strand" evidence="20">
    <location>
        <begin position="340"/>
        <end position="353"/>
    </location>
</feature>
<feature type="helix" evidence="20">
    <location>
        <begin position="364"/>
        <end position="367"/>
    </location>
</feature>
<feature type="strand" evidence="20">
    <location>
        <begin position="368"/>
        <end position="370"/>
    </location>
</feature>
<feature type="strand" evidence="20">
    <location>
        <begin position="375"/>
        <end position="382"/>
    </location>
</feature>
<feature type="helix" evidence="20">
    <location>
        <begin position="388"/>
        <end position="391"/>
    </location>
</feature>
<feature type="helix" evidence="20">
    <location>
        <begin position="397"/>
        <end position="409"/>
    </location>
</feature>
<feature type="strand" evidence="20">
    <location>
        <begin position="416"/>
        <end position="424"/>
    </location>
</feature>
<feature type="strand" evidence="20">
    <location>
        <begin position="427"/>
        <end position="434"/>
    </location>
</feature>
<feature type="helix" evidence="20">
    <location>
        <begin position="435"/>
        <end position="440"/>
    </location>
</feature>
<feature type="strand" evidence="20">
    <location>
        <begin position="441"/>
        <end position="450"/>
    </location>
</feature>
<feature type="helix" evidence="20">
    <location>
        <begin position="453"/>
        <end position="455"/>
    </location>
</feature>
<feature type="strand" evidence="20">
    <location>
        <begin position="460"/>
        <end position="469"/>
    </location>
</feature>
<feature type="strand" evidence="20">
    <location>
        <begin position="472"/>
        <end position="480"/>
    </location>
</feature>
<feature type="helix" evidence="20">
    <location>
        <begin position="485"/>
        <end position="487"/>
    </location>
</feature>
<feature type="helix" evidence="20">
    <location>
        <begin position="488"/>
        <end position="501"/>
    </location>
</feature>
<feature type="strand" evidence="19">
    <location>
        <begin position="509"/>
        <end position="511"/>
    </location>
</feature>
<feature type="strand" evidence="20">
    <location>
        <begin position="518"/>
        <end position="527"/>
    </location>
</feature>
<feature type="helix" evidence="20">
    <location>
        <begin position="537"/>
        <end position="545"/>
    </location>
</feature>
<feature type="helix" evidence="20">
    <location>
        <begin position="549"/>
        <end position="553"/>
    </location>
</feature>
<feature type="helix" evidence="20">
    <location>
        <begin position="557"/>
        <end position="563"/>
    </location>
</feature>
<feature type="strand" evidence="21">
    <location>
        <begin position="566"/>
        <end position="568"/>
    </location>
</feature>
<feature type="strand" evidence="20">
    <location>
        <begin position="588"/>
        <end position="591"/>
    </location>
</feature>
<feature type="strand" evidence="21">
    <location>
        <begin position="594"/>
        <end position="596"/>
    </location>
</feature>
<feature type="strand" evidence="20">
    <location>
        <begin position="604"/>
        <end position="620"/>
    </location>
</feature>
<feature type="strand" evidence="20">
    <location>
        <begin position="626"/>
        <end position="629"/>
    </location>
</feature>
<feature type="strand" evidence="20">
    <location>
        <begin position="632"/>
        <end position="643"/>
    </location>
</feature>
<reference key="1">
    <citation type="journal article" date="1995" name="J. Biol. Chem.">
        <title>Properties of type II inositol polyphosphate 5-phosphatase.</title>
        <authorList>
            <person name="Jefferson A.B."/>
            <person name="Majerus P.W."/>
        </authorList>
    </citation>
    <scope>NUCLEOTIDE SEQUENCE [MRNA] (ISOFORM 2)</scope>
    <scope>FUNCTION</scope>
    <scope>CATALYTIC ACTIVITY</scope>
    <scope>SUBCELLULAR LOCATION</scope>
    <scope>ISOPRENYLATION AT CYS-990</scope>
    <scope>MUTAGENESIS OF CYS-990</scope>
    <scope>VARIANT THR-745</scope>
</reference>
<reference key="2">
    <citation type="journal article" date="2006" name="Nature">
        <title>The DNA sequence and biological annotation of human chromosome 1.</title>
        <authorList>
            <person name="Gregory S.G."/>
            <person name="Barlow K.F."/>
            <person name="McLay K.E."/>
            <person name="Kaul R."/>
            <person name="Swarbreck D."/>
            <person name="Dunham A."/>
            <person name="Scott C.E."/>
            <person name="Howe K.L."/>
            <person name="Woodfine K."/>
            <person name="Spencer C.C.A."/>
            <person name="Jones M.C."/>
            <person name="Gillson C."/>
            <person name="Searle S."/>
            <person name="Zhou Y."/>
            <person name="Kokocinski F."/>
            <person name="McDonald L."/>
            <person name="Evans R."/>
            <person name="Phillips K."/>
            <person name="Atkinson A."/>
            <person name="Cooper R."/>
            <person name="Jones C."/>
            <person name="Hall R.E."/>
            <person name="Andrews T.D."/>
            <person name="Lloyd C."/>
            <person name="Ainscough R."/>
            <person name="Almeida J.P."/>
            <person name="Ambrose K.D."/>
            <person name="Anderson F."/>
            <person name="Andrew R.W."/>
            <person name="Ashwell R.I.S."/>
            <person name="Aubin K."/>
            <person name="Babbage A.K."/>
            <person name="Bagguley C.L."/>
            <person name="Bailey J."/>
            <person name="Beasley H."/>
            <person name="Bethel G."/>
            <person name="Bird C.P."/>
            <person name="Bray-Allen S."/>
            <person name="Brown J.Y."/>
            <person name="Brown A.J."/>
            <person name="Buckley D."/>
            <person name="Burton J."/>
            <person name="Bye J."/>
            <person name="Carder C."/>
            <person name="Chapman J.C."/>
            <person name="Clark S.Y."/>
            <person name="Clarke G."/>
            <person name="Clee C."/>
            <person name="Cobley V."/>
            <person name="Collier R.E."/>
            <person name="Corby N."/>
            <person name="Coville G.J."/>
            <person name="Davies J."/>
            <person name="Deadman R."/>
            <person name="Dunn M."/>
            <person name="Earthrowl M."/>
            <person name="Ellington A.G."/>
            <person name="Errington H."/>
            <person name="Frankish A."/>
            <person name="Frankland J."/>
            <person name="French L."/>
            <person name="Garner P."/>
            <person name="Garnett J."/>
            <person name="Gay L."/>
            <person name="Ghori M.R.J."/>
            <person name="Gibson R."/>
            <person name="Gilby L.M."/>
            <person name="Gillett W."/>
            <person name="Glithero R.J."/>
            <person name="Grafham D.V."/>
            <person name="Griffiths C."/>
            <person name="Griffiths-Jones S."/>
            <person name="Grocock R."/>
            <person name="Hammond S."/>
            <person name="Harrison E.S.I."/>
            <person name="Hart E."/>
            <person name="Haugen E."/>
            <person name="Heath P.D."/>
            <person name="Holmes S."/>
            <person name="Holt K."/>
            <person name="Howden P.J."/>
            <person name="Hunt A.R."/>
            <person name="Hunt S.E."/>
            <person name="Hunter G."/>
            <person name="Isherwood J."/>
            <person name="James R."/>
            <person name="Johnson C."/>
            <person name="Johnson D."/>
            <person name="Joy A."/>
            <person name="Kay M."/>
            <person name="Kershaw J.K."/>
            <person name="Kibukawa M."/>
            <person name="Kimberley A.M."/>
            <person name="King A."/>
            <person name="Knights A.J."/>
            <person name="Lad H."/>
            <person name="Laird G."/>
            <person name="Lawlor S."/>
            <person name="Leongamornlert D.A."/>
            <person name="Lloyd D.M."/>
            <person name="Loveland J."/>
            <person name="Lovell J."/>
            <person name="Lush M.J."/>
            <person name="Lyne R."/>
            <person name="Martin S."/>
            <person name="Mashreghi-Mohammadi M."/>
            <person name="Matthews L."/>
            <person name="Matthews N.S.W."/>
            <person name="McLaren S."/>
            <person name="Milne S."/>
            <person name="Mistry S."/>
            <person name="Moore M.J.F."/>
            <person name="Nickerson T."/>
            <person name="O'Dell C.N."/>
            <person name="Oliver K."/>
            <person name="Palmeiri A."/>
            <person name="Palmer S.A."/>
            <person name="Parker A."/>
            <person name="Patel D."/>
            <person name="Pearce A.V."/>
            <person name="Peck A.I."/>
            <person name="Pelan S."/>
            <person name="Phelps K."/>
            <person name="Phillimore B.J."/>
            <person name="Plumb R."/>
            <person name="Rajan J."/>
            <person name="Raymond C."/>
            <person name="Rouse G."/>
            <person name="Saenphimmachak C."/>
            <person name="Sehra H.K."/>
            <person name="Sheridan E."/>
            <person name="Shownkeen R."/>
            <person name="Sims S."/>
            <person name="Skuce C.D."/>
            <person name="Smith M."/>
            <person name="Steward C."/>
            <person name="Subramanian S."/>
            <person name="Sycamore N."/>
            <person name="Tracey A."/>
            <person name="Tromans A."/>
            <person name="Van Helmond Z."/>
            <person name="Wall M."/>
            <person name="Wallis J.M."/>
            <person name="White S."/>
            <person name="Whitehead S.L."/>
            <person name="Wilkinson J.E."/>
            <person name="Willey D.L."/>
            <person name="Williams H."/>
            <person name="Wilming L."/>
            <person name="Wray P.W."/>
            <person name="Wu Z."/>
            <person name="Coulson A."/>
            <person name="Vaudin M."/>
            <person name="Sulston J.E."/>
            <person name="Durbin R.M."/>
            <person name="Hubbard T."/>
            <person name="Wooster R."/>
            <person name="Dunham I."/>
            <person name="Carter N.P."/>
            <person name="McVean G."/>
            <person name="Ross M.T."/>
            <person name="Harrow J."/>
            <person name="Olson M.V."/>
            <person name="Beck S."/>
            <person name="Rogers J."/>
            <person name="Bentley D.R."/>
        </authorList>
    </citation>
    <scope>NUCLEOTIDE SEQUENCE [LARGE SCALE GENOMIC DNA] (ISOFORMS 1; 2 AND 3)</scope>
</reference>
<reference key="3">
    <citation type="journal article" date="2004" name="Genome Res.">
        <title>The status, quality, and expansion of the NIH full-length cDNA project: the Mammalian Gene Collection (MGC).</title>
        <authorList>
            <consortium name="The MGC Project Team"/>
        </authorList>
    </citation>
    <scope>NUCLEOTIDE SEQUENCE [LARGE SCALE MRNA] (ISOFORM 4)</scope>
    <scope>VARIANT THR-745</scope>
    <source>
        <tissue>Lymph</tissue>
    </source>
</reference>
<reference key="4">
    <citation type="journal article" date="2007" name="BMC Genomics">
        <title>The full-ORF clone resource of the German cDNA consortium.</title>
        <authorList>
            <person name="Bechtel S."/>
            <person name="Rosenfelder H."/>
            <person name="Duda A."/>
            <person name="Schmidt C.P."/>
            <person name="Ernst U."/>
            <person name="Wellenreuther R."/>
            <person name="Mehrle A."/>
            <person name="Schuster C."/>
            <person name="Bahr A."/>
            <person name="Bloecker H."/>
            <person name="Heubner D."/>
            <person name="Hoerlein A."/>
            <person name="Michel G."/>
            <person name="Wedler H."/>
            <person name="Koehrer K."/>
            <person name="Ottenwaelder B."/>
            <person name="Poustka A."/>
            <person name="Wiemann S."/>
            <person name="Schupp I."/>
        </authorList>
    </citation>
    <scope>NUCLEOTIDE SEQUENCE [LARGE SCALE MRNA] OF 1-178</scope>
    <source>
        <tissue>Stomach</tissue>
    </source>
</reference>
<reference key="5">
    <citation type="journal article" date="1991" name="J. Biol. Chem.">
        <title>Cloning and expression of human 75-kDa inositol polyphosphate-5-phosphatase.</title>
        <authorList>
            <person name="Ross T.S."/>
            <person name="Jefferson A.B."/>
            <person name="Mitchell C.A."/>
            <person name="Majerus P.W."/>
        </authorList>
    </citation>
    <scope>NUCLEOTIDE SEQUENCE [MRNA] OF 284-954</scope>
    <scope>PROTEIN SEQUENCE OF 321-339</scope>
    <scope>VARIANT THR-745</scope>
    <source>
        <tissue>Placenta</tissue>
    </source>
</reference>
<reference key="6">
    <citation type="journal article" date="2007" name="J. Cell Sci.">
        <title>Targeting of the type II inositol polyphosphate 5-phosphatase INPP5B to the early secretory pathway.</title>
        <authorList>
            <person name="Williams C."/>
            <person name="Choudhury R."/>
            <person name="McKenzie E."/>
            <person name="Lowe M."/>
        </authorList>
    </citation>
    <scope>SUBCELLULAR LOCATION</scope>
    <scope>INTERACTION WITH RAB GTPASES</scope>
</reference>
<reference key="7">
    <citation type="journal article" date="2010" name="Proc. Natl. Acad. Sci. U.S.A.">
        <title>Two closely related endocytic proteins that share a common OCRL-binding motif with APPL1.</title>
        <authorList>
            <person name="Swan L.E."/>
            <person name="Tomasini L."/>
            <person name="Pirruccello M."/>
            <person name="Lunardi J."/>
            <person name="De Camilli P."/>
        </authorList>
    </citation>
    <scope>INTERACTION WITH PHETA1</scope>
</reference>
<reference key="8">
    <citation type="journal article" date="2011" name="BMC Syst. Biol.">
        <title>Initial characterization of the human central proteome.</title>
        <authorList>
            <person name="Burkard T.R."/>
            <person name="Planyavsky M."/>
            <person name="Kaupe I."/>
            <person name="Breitwieser F.P."/>
            <person name="Buerckstuemmer T."/>
            <person name="Bennett K.L."/>
            <person name="Superti-Furga G."/>
            <person name="Colinge J."/>
        </authorList>
    </citation>
    <scope>IDENTIFICATION BY MASS SPECTROMETRY [LARGE SCALE ANALYSIS]</scope>
</reference>
<reference key="9">
    <citation type="journal article" date="2011" name="Mol. Biol. Cell">
        <title>The PH domain proteins IPIP27A and B link OCRL1 to receptor recycling in the endocytic pathway.</title>
        <authorList>
            <person name="Noakes C.J."/>
            <person name="Lee G."/>
            <person name="Lowe M."/>
        </authorList>
    </citation>
    <scope>INTERACTION WITH PHETA1 AND PHETA2</scope>
</reference>
<reference key="10">
    <citation type="journal article" date="2015" name="J. Cell Biol.">
        <title>Sac2/INPP5F is an inositol 4-phosphatase that functions in the endocytic pathway.</title>
        <authorList>
            <person name="Nakatsu F."/>
            <person name="Messa M."/>
            <person name="Nandez R."/>
            <person name="Czapla H."/>
            <person name="Zou Y."/>
            <person name="Strittmatter S.M."/>
            <person name="De Camilli P."/>
        </authorList>
    </citation>
    <scope>INTERACTION WITH INPP5F</scope>
</reference>
<reference key="11">
    <citation type="journal article" date="2016" name="Elife">
        <title>Phosphoproteomics reveals that Parkinson's disease kinase LRRK2 regulates a subset of Rab GTPases.</title>
        <authorList>
            <person name="Steger M."/>
            <person name="Tonelli F."/>
            <person name="Ito G."/>
            <person name="Davies P."/>
            <person name="Trost M."/>
            <person name="Vetter M."/>
            <person name="Wachter S."/>
            <person name="Lorentzen E."/>
            <person name="Duddy G."/>
            <person name="Wilson S."/>
            <person name="Baptista M.A."/>
            <person name="Fiske B.K."/>
            <person name="Fell M.J."/>
            <person name="Morrow J.A."/>
            <person name="Reith A.D."/>
            <person name="Alessi D.R."/>
            <person name="Mann M."/>
        </authorList>
    </citation>
    <scope>IDENTIFICATION BY MASS SPECTROMETRY</scope>
    <scope>INTERACTION WITH RAB8A</scope>
</reference>
<reference key="12">
    <citation type="submission" date="2010-07" db="PDB data bank">
        <title>Crystal structure of INPP5B in complex with phosphatidylinositol 4-phosphate (CASP target).</title>
        <authorList>
            <consortium name="Structural genomics consortium (SGC)"/>
        </authorList>
    </citation>
    <scope>X-RAY CRYSTALLOGRAPHY (2.4 ANGSTROMS) OF 339-646 IN COMPLEX WITH MAGNESIUM AND PHOSPHATIDYLINOSITOL 4-PHOSPHATE</scope>
</reference>
<comment type="function">
    <text evidence="13">Hydrolyzes phosphatidylinositol 4,5-bisphosphate (PtIns(4,5)P2) and the signaling molecule phosphatidylinositol 1,4,5-trisphosphate (PtIns(1,4,5)P3), and thereby modulates cellular signaling events.</text>
</comment>
<comment type="catalytic activity">
    <reaction evidence="13">
        <text>a 1,2-diacyl-sn-glycero-3-phospho-(1D-myo-inositol-4,5-bisphosphate) + H2O = a 1,2-diacyl-sn-glycero-3-phospho-(1D-myo-inositol 4-phosphate) + phosphate</text>
        <dbReference type="Rhea" id="RHEA:22764"/>
        <dbReference type="ChEBI" id="CHEBI:15377"/>
        <dbReference type="ChEBI" id="CHEBI:43474"/>
        <dbReference type="ChEBI" id="CHEBI:58178"/>
        <dbReference type="ChEBI" id="CHEBI:58456"/>
        <dbReference type="EC" id="3.1.3.36"/>
    </reaction>
</comment>
<comment type="subunit">
    <text evidence="8 9 10 11 12 14">Interacts with APPL1, PHETA1 and PHETA2 (PubMed:20133602, PubMed:21233288). Interacts with several Rab GTPases, at least RAB1A, RAB2A, RAB5A, RAB6A, RAB8A, RAB9A and RAB33B; these interactions may play a dual role in targeting INPP5B to the specific membranes and stimulating its phosphatase activity (PubMed:17956944, PubMed:26824392, Ref.12). Interacts preferentially with non-phosphorylated RAB8A; phosphorylation of RAB8A on 'Thr-72' disrupts this interaction (PubMed:26824392). Interacts with INPP5F (PubMed:25869668).</text>
</comment>
<comment type="subcellular location">
    <subcellularLocation>
        <location evidence="13">Cytoplasm</location>
        <location evidence="13">Cytosol</location>
    </subcellularLocation>
    <subcellularLocation>
        <location evidence="8">Endoplasmic reticulum-Golgi intermediate compartment</location>
    </subcellularLocation>
    <subcellularLocation>
        <location evidence="8">Early endosome membrane</location>
    </subcellularLocation>
    <subcellularLocation>
        <location evidence="13">Membrane</location>
        <topology evidence="18">Peripheral membrane protein</topology>
        <orientation evidence="18">Cytoplasmic side</orientation>
    </subcellularLocation>
    <subcellularLocation>
        <location evidence="2">Cytoplasmic vesicle</location>
        <location evidence="2">Phagosome membrane</location>
    </subcellularLocation>
    <subcellularLocation>
        <location evidence="8">Golgi apparatus</location>
    </subcellularLocation>
</comment>
<comment type="alternative products">
    <event type="alternative splicing"/>
    <isoform>
        <id>P32019-1</id>
        <name>1</name>
        <sequence type="displayed"/>
    </isoform>
    <isoform>
        <id>P32019-2</id>
        <name>2</name>
        <sequence type="described" ref="VSP_012820"/>
    </isoform>
    <isoform>
        <id>P32019-3</id>
        <name>3</name>
        <sequence type="described" ref="VSP_012821"/>
    </isoform>
    <isoform>
        <id>P32019-4</id>
        <name>4</name>
        <sequence type="described" ref="VSP_013902 VSP_013903"/>
    </isoform>
</comment>
<comment type="tissue specificity">
    <text>Platelets.</text>
</comment>
<comment type="domain">
    <text evidence="1">The ASH (ASPM-SPD2-Hydin) and RhoGAP (Rho GTPase activating) domains form a single folding module. The ASH domain has an immunoglobulin-like fold, the Rho-GAP domain lacks the catalytic arginine and is catalytically inactive. The ASH-RhoGAP module regulates the majority of the protein-protein interactions currently described. The ASH domain mediates association with membrane-targeting Rab GTPases. The Rho-GAP domain interacts with the endocytic adapter APPL1, which is then displaced by PHETA1 and PHETA2 as endosomes mature, all three interactions rely on F&amp;H motifs, an approximately 12-13 amino-acid sequence centered around Phe and His residues essential for binding (By similarity).</text>
</comment>
<comment type="PTM">
    <text evidence="13">Isoprenylation at Cys-990 may be required for localization at the membrane.</text>
</comment>
<comment type="PTM">
    <text evidence="7">May be proteolytically cleaved after Lys-320 as inferred from N-terminal protein sequence of the 75 kda form.</text>
</comment>
<comment type="similarity">
    <text evidence="17">Belongs to the inositol 1,4,5-trisphosphate 5-phosphatase type II family.</text>
</comment>
<comment type="sequence caution" evidence="17">
    <conflict type="erroneous initiation">
        <sequence resource="EMBL-CDS" id="AAA79207"/>
    </conflict>
    <text>Extended N-terminus.</text>
</comment>
<gene>
    <name type="primary">INPP5B</name>
    <name type="synonym">OCRL2</name>
</gene>
<sequence length="993" mass="112852">MDQSVAIQETLAEGEYCVIAVQGVLCEGDSRQSRLLGLVRYRLEHGGQEHALFLYTHRRMAITGDDVSLDQIVPVSRDFTLEEVSPDGELYILGSDVTVQLDTAELSLVFQLPFGSQTRMFLHEVARACPGFDSATRDPEFLWLSRYRCAELELEMPTPRGCNSALVTWPGYATIGGGRYPSRKKRWGLEEARPQGAGSVLFWGGAMEKTGFRLMERAHGGGFVWGRSARDGRRDEELEEAGREMSAAAGSRERNTAGGSNFDGLRPNGKGVPMDQSSRGQDKPESLQPRQNKSKSEITDMVRSSTITVSDKAHILSMQKFGLRDTIVKSHLLQKEEDYTYIQNFRFFAGTYNVNGQSPKECLRLWLSNGIQAPDVYCVGFQELDLSKEAFFFHDTPKEEEWFKAVSEGLHPDAKYAKVKLIRLVGIMLLLYVKQEHAAYISEVEAETVGTGIMGRMGNKGGVAIRFQFHNTSICVVNSHLAAHIEEYERRNQDYKDICSRMQFCQPDPSLPPLTISNHDVILWLGDLNYRIEELDVEKVKKLIEEKDFQMLYAYDQLKIQVAAKTVFEGFTEGELTFQPTYKYDTGSDDWDTSEKCRAPAWCDRILWKGKNITQLSYQSHMALKTSDHKPVSSVFDIGVRVVNDELYRKTLEEIVRSLDKMENANIPSVSLSKREFCFQNVKYMQLKVESFTIHNGQVPCHFEFINKPDEESYCKQWLNANPSRGFLLPDSDVEIDLELFVNKMTATKLNSGEDKIEDILVLHLDRGKDYFLSVSGNYLPSCFGSPIHTLCYMREPILDLPLETISELTLMPVWTGDDGSQLDSPMEIPKELWMMVDYLYRNAVQQEDLFQQPGLRSEFEHIRDCLDTGMIDNLSASNHSVAEALLLFLESLPEPVICYSTYHNCLECSGNYTASKQVISTLPIFHKNVFHYLMAFLRELLKNSAKNHLDENILASIFGSLLLRNPAGHQKLDMTEKKKAQEFIHQFLCNPL</sequence>
<name>I5P2_HUMAN</name>